<gene>
    <name type="primary">crp79</name>
    <name type="synonym">meu5</name>
    <name type="ORF">SPAC1610.03c</name>
</gene>
<organism>
    <name type="scientific">Schizosaccharomyces pombe (strain 972 / ATCC 24843)</name>
    <name type="common">Fission yeast</name>
    <dbReference type="NCBI Taxonomy" id="284812"/>
    <lineage>
        <taxon>Eukaryota</taxon>
        <taxon>Fungi</taxon>
        <taxon>Dikarya</taxon>
        <taxon>Ascomycota</taxon>
        <taxon>Taphrinomycotina</taxon>
        <taxon>Schizosaccharomycetes</taxon>
        <taxon>Schizosaccharomycetales</taxon>
        <taxon>Schizosaccharomycetaceae</taxon>
        <taxon>Schizosaccharomyces</taxon>
    </lineage>
</organism>
<accession>Q9P6M8</accession>
<accession>Q8X1D3</accession>
<accession>Q96WR4</accession>
<name>PABPX_SCHPO</name>
<comment type="function">
    <text evidence="3">Binds the poly(A) tail of mRNA. Involved in the export of mRNA from the nucleus to the cytoplasm.</text>
</comment>
<comment type="subcellular location">
    <subcellularLocation>
        <location evidence="3">Cytoplasm</location>
    </subcellularLocation>
    <subcellularLocation>
        <location evidence="3">Nucleus</location>
    </subcellularLocation>
</comment>
<protein>
    <recommendedName>
        <fullName>mRNA export factor crp79</fullName>
    </recommendedName>
    <alternativeName>
        <fullName>Meiotic expression up-regulated protein 5</fullName>
    </alternativeName>
    <alternativeName>
        <fullName>Polyadenylate-binding protein crp79</fullName>
        <shortName>PABP</shortName>
        <shortName>Poly(A)-binding protein</shortName>
    </alternativeName>
</protein>
<keyword id="KW-0963">Cytoplasm</keyword>
<keyword id="KW-0509">mRNA transport</keyword>
<keyword id="KW-0539">Nucleus</keyword>
<keyword id="KW-1185">Reference proteome</keyword>
<keyword id="KW-0677">Repeat</keyword>
<keyword id="KW-0694">RNA-binding</keyword>
<keyword id="KW-0813">Transport</keyword>
<evidence type="ECO:0000255" key="1">
    <source>
        <dbReference type="PROSITE-ProRule" id="PRU00176"/>
    </source>
</evidence>
<evidence type="ECO:0000256" key="2">
    <source>
        <dbReference type="SAM" id="MobiDB-lite"/>
    </source>
</evidence>
<evidence type="ECO:0000269" key="3">
    <source>
    </source>
</evidence>
<evidence type="ECO:0000305" key="4"/>
<dbReference type="EMBL" id="AF432874">
    <property type="protein sequence ID" value="AAL65912.1"/>
    <property type="molecule type" value="Genomic_DNA"/>
</dbReference>
<dbReference type="EMBL" id="CU329670">
    <property type="protein sequence ID" value="CAD99126.1"/>
    <property type="molecule type" value="Genomic_DNA"/>
</dbReference>
<dbReference type="EMBL" id="AB054316">
    <property type="protein sequence ID" value="BAB60882.1"/>
    <property type="molecule type" value="mRNA"/>
</dbReference>
<dbReference type="RefSeq" id="NP_001018242.1">
    <property type="nucleotide sequence ID" value="NM_001018920.2"/>
</dbReference>
<dbReference type="SMR" id="Q9P6M8"/>
<dbReference type="BioGRID" id="280597">
    <property type="interactions" value="88"/>
</dbReference>
<dbReference type="FunCoup" id="Q9P6M8">
    <property type="interactions" value="5"/>
</dbReference>
<dbReference type="STRING" id="284812.Q9P6M8"/>
<dbReference type="PaxDb" id="4896-SPAC1610.03c.1"/>
<dbReference type="EnsemblFungi" id="SPAC1610.03c.1">
    <property type="protein sequence ID" value="SPAC1610.03c.1:pep"/>
    <property type="gene ID" value="SPAC1610.03c"/>
</dbReference>
<dbReference type="GeneID" id="3361521"/>
<dbReference type="KEGG" id="spo:3361521"/>
<dbReference type="PomBase" id="SPAC1610.03c">
    <property type="gene designation" value="crp79"/>
</dbReference>
<dbReference type="VEuPathDB" id="FungiDB:SPAC1610.03c"/>
<dbReference type="eggNOG" id="KOG0118">
    <property type="taxonomic scope" value="Eukaryota"/>
</dbReference>
<dbReference type="HOGENOM" id="CLU_400179_0_0_1"/>
<dbReference type="InParanoid" id="Q9P6M8"/>
<dbReference type="OMA" id="LACYPNS"/>
<dbReference type="PhylomeDB" id="Q9P6M8"/>
<dbReference type="PRO" id="PR:Q9P6M8"/>
<dbReference type="Proteomes" id="UP000002485">
    <property type="component" value="Chromosome I"/>
</dbReference>
<dbReference type="GO" id="GO:0005737">
    <property type="term" value="C:cytoplasm"/>
    <property type="evidence" value="ECO:0000314"/>
    <property type="project" value="PomBase"/>
</dbReference>
<dbReference type="GO" id="GO:0010494">
    <property type="term" value="C:cytoplasmic stress granule"/>
    <property type="evidence" value="ECO:0000318"/>
    <property type="project" value="GO_Central"/>
</dbReference>
<dbReference type="GO" id="GO:0005829">
    <property type="term" value="C:cytosol"/>
    <property type="evidence" value="ECO:0000318"/>
    <property type="project" value="GO_Central"/>
</dbReference>
<dbReference type="GO" id="GO:0005634">
    <property type="term" value="C:nucleus"/>
    <property type="evidence" value="ECO:0000314"/>
    <property type="project" value="PomBase"/>
</dbReference>
<dbReference type="GO" id="GO:1990904">
    <property type="term" value="C:ribonucleoprotein complex"/>
    <property type="evidence" value="ECO:0000318"/>
    <property type="project" value="GO_Central"/>
</dbReference>
<dbReference type="GO" id="GO:0003730">
    <property type="term" value="F:mRNA 3'-UTR binding"/>
    <property type="evidence" value="ECO:0000318"/>
    <property type="project" value="GO_Central"/>
</dbReference>
<dbReference type="GO" id="GO:0008143">
    <property type="term" value="F:poly(A) binding"/>
    <property type="evidence" value="ECO:0000314"/>
    <property type="project" value="PomBase"/>
</dbReference>
<dbReference type="GO" id="GO:0008266">
    <property type="term" value="F:poly(U) RNA binding"/>
    <property type="evidence" value="ECO:0000318"/>
    <property type="project" value="GO_Central"/>
</dbReference>
<dbReference type="GO" id="GO:0003723">
    <property type="term" value="F:RNA binding"/>
    <property type="evidence" value="ECO:0000314"/>
    <property type="project" value="PomBase"/>
</dbReference>
<dbReference type="GO" id="GO:0006406">
    <property type="term" value="P:mRNA export from nucleus"/>
    <property type="evidence" value="ECO:0000316"/>
    <property type="project" value="PomBase"/>
</dbReference>
<dbReference type="GO" id="GO:0048255">
    <property type="term" value="P:mRNA stabilization"/>
    <property type="evidence" value="ECO:0000315"/>
    <property type="project" value="PomBase"/>
</dbReference>
<dbReference type="GO" id="GO:1902373">
    <property type="term" value="P:negative regulation of mRNA catabolic process"/>
    <property type="evidence" value="ECO:0000315"/>
    <property type="project" value="PomBase"/>
</dbReference>
<dbReference type="CDD" id="cd21619">
    <property type="entry name" value="RRM1_Crp79"/>
    <property type="match status" value="1"/>
</dbReference>
<dbReference type="CDD" id="cd21621">
    <property type="entry name" value="RRM2_Crp79_Mug28"/>
    <property type="match status" value="1"/>
</dbReference>
<dbReference type="CDD" id="cd21622">
    <property type="entry name" value="RRM3_Crp79_Mug28"/>
    <property type="match status" value="1"/>
</dbReference>
<dbReference type="Gene3D" id="3.30.70.330">
    <property type="match status" value="3"/>
</dbReference>
<dbReference type="InterPro" id="IPR050502">
    <property type="entry name" value="Euk_RNA-bind_prot"/>
</dbReference>
<dbReference type="InterPro" id="IPR012677">
    <property type="entry name" value="Nucleotide-bd_a/b_plait_sf"/>
</dbReference>
<dbReference type="InterPro" id="IPR035979">
    <property type="entry name" value="RBD_domain_sf"/>
</dbReference>
<dbReference type="InterPro" id="IPR000504">
    <property type="entry name" value="RRM_dom"/>
</dbReference>
<dbReference type="PANTHER" id="PTHR48025">
    <property type="entry name" value="OS02G0815200 PROTEIN"/>
    <property type="match status" value="1"/>
</dbReference>
<dbReference type="PANTHER" id="PTHR48025:SF1">
    <property type="entry name" value="RRM DOMAIN-CONTAINING PROTEIN"/>
    <property type="match status" value="1"/>
</dbReference>
<dbReference type="Pfam" id="PF00076">
    <property type="entry name" value="RRM_1"/>
    <property type="match status" value="3"/>
</dbReference>
<dbReference type="SMART" id="SM00360">
    <property type="entry name" value="RRM"/>
    <property type="match status" value="3"/>
</dbReference>
<dbReference type="SUPFAM" id="SSF54928">
    <property type="entry name" value="RNA-binding domain, RBD"/>
    <property type="match status" value="3"/>
</dbReference>
<dbReference type="PROSITE" id="PS50102">
    <property type="entry name" value="RRM"/>
    <property type="match status" value="3"/>
</dbReference>
<feature type="chain" id="PRO_0000081719" description="mRNA export factor crp79">
    <location>
        <begin position="1"/>
        <end position="710"/>
    </location>
</feature>
<feature type="domain" description="RRM 1" evidence="1">
    <location>
        <begin position="19"/>
        <end position="102"/>
    </location>
</feature>
<feature type="domain" description="RRM 2" evidence="1">
    <location>
        <begin position="222"/>
        <end position="292"/>
    </location>
</feature>
<feature type="domain" description="RRM 3" evidence="1">
    <location>
        <begin position="401"/>
        <end position="474"/>
    </location>
</feature>
<feature type="region of interest" description="Disordered" evidence="2">
    <location>
        <begin position="333"/>
        <end position="357"/>
    </location>
</feature>
<feature type="region of interest" description="Disordered" evidence="2">
    <location>
        <begin position="502"/>
        <end position="544"/>
    </location>
</feature>
<feature type="compositionally biased region" description="Polar residues" evidence="2">
    <location>
        <begin position="333"/>
        <end position="348"/>
    </location>
</feature>
<feature type="compositionally biased region" description="Polar residues" evidence="2">
    <location>
        <begin position="502"/>
        <end position="524"/>
    </location>
</feature>
<feature type="compositionally biased region" description="Basic and acidic residues" evidence="2">
    <location>
        <begin position="525"/>
        <end position="538"/>
    </location>
</feature>
<feature type="sequence conflict" description="In Ref. 1; AAL65912." evidence="4" ref="1">
    <original>T</original>
    <variation>A</variation>
    <location>
        <position position="101"/>
    </location>
</feature>
<feature type="sequence conflict" description="In Ref. 1; AAL65912." evidence="4" ref="1">
    <original>N</original>
    <variation>K</variation>
    <location>
        <position position="580"/>
    </location>
</feature>
<reference key="1">
    <citation type="journal article" date="2002" name="Mol. Biol. Cell">
        <title>Crp79p, like Mex67p, is an auxiliary mRNA export factor in Schizosaccharomyces pombe.</title>
        <authorList>
            <person name="Thakurta A.G."/>
            <person name="Whalen W.A."/>
            <person name="Yoon J.H."/>
            <person name="Bharathi A."/>
            <person name="Kozak L."/>
            <person name="Whiteford C."/>
            <person name="Love D.C."/>
            <person name="Hanover J.A."/>
            <person name="Dhar R."/>
        </authorList>
    </citation>
    <scope>NUCLEOTIDE SEQUENCE [GENOMIC DNA]</scope>
    <scope>FUNCTION</scope>
    <scope>SUBCELLULAR LOCATION</scope>
</reference>
<reference key="2">
    <citation type="journal article" date="2002" name="Nature">
        <title>The genome sequence of Schizosaccharomyces pombe.</title>
        <authorList>
            <person name="Wood V."/>
            <person name="Gwilliam R."/>
            <person name="Rajandream M.A."/>
            <person name="Lyne M.H."/>
            <person name="Lyne R."/>
            <person name="Stewart A."/>
            <person name="Sgouros J.G."/>
            <person name="Peat N."/>
            <person name="Hayles J."/>
            <person name="Baker S.G."/>
            <person name="Basham D."/>
            <person name="Bowman S."/>
            <person name="Brooks K."/>
            <person name="Brown D."/>
            <person name="Brown S."/>
            <person name="Chillingworth T."/>
            <person name="Churcher C.M."/>
            <person name="Collins M."/>
            <person name="Connor R."/>
            <person name="Cronin A."/>
            <person name="Davis P."/>
            <person name="Feltwell T."/>
            <person name="Fraser A."/>
            <person name="Gentles S."/>
            <person name="Goble A."/>
            <person name="Hamlin N."/>
            <person name="Harris D.E."/>
            <person name="Hidalgo J."/>
            <person name="Hodgson G."/>
            <person name="Holroyd S."/>
            <person name="Hornsby T."/>
            <person name="Howarth S."/>
            <person name="Huckle E.J."/>
            <person name="Hunt S."/>
            <person name="Jagels K."/>
            <person name="James K.D."/>
            <person name="Jones L."/>
            <person name="Jones M."/>
            <person name="Leather S."/>
            <person name="McDonald S."/>
            <person name="McLean J."/>
            <person name="Mooney P."/>
            <person name="Moule S."/>
            <person name="Mungall K.L."/>
            <person name="Murphy L.D."/>
            <person name="Niblett D."/>
            <person name="Odell C."/>
            <person name="Oliver K."/>
            <person name="O'Neil S."/>
            <person name="Pearson D."/>
            <person name="Quail M.A."/>
            <person name="Rabbinowitsch E."/>
            <person name="Rutherford K.M."/>
            <person name="Rutter S."/>
            <person name="Saunders D."/>
            <person name="Seeger K."/>
            <person name="Sharp S."/>
            <person name="Skelton J."/>
            <person name="Simmonds M.N."/>
            <person name="Squares R."/>
            <person name="Squares S."/>
            <person name="Stevens K."/>
            <person name="Taylor K."/>
            <person name="Taylor R.G."/>
            <person name="Tivey A."/>
            <person name="Walsh S.V."/>
            <person name="Warren T."/>
            <person name="Whitehead S."/>
            <person name="Woodward J.R."/>
            <person name="Volckaert G."/>
            <person name="Aert R."/>
            <person name="Robben J."/>
            <person name="Grymonprez B."/>
            <person name="Weltjens I."/>
            <person name="Vanstreels E."/>
            <person name="Rieger M."/>
            <person name="Schaefer M."/>
            <person name="Mueller-Auer S."/>
            <person name="Gabel C."/>
            <person name="Fuchs M."/>
            <person name="Duesterhoeft A."/>
            <person name="Fritzc C."/>
            <person name="Holzer E."/>
            <person name="Moestl D."/>
            <person name="Hilbert H."/>
            <person name="Borzym K."/>
            <person name="Langer I."/>
            <person name="Beck A."/>
            <person name="Lehrach H."/>
            <person name="Reinhardt R."/>
            <person name="Pohl T.M."/>
            <person name="Eger P."/>
            <person name="Zimmermann W."/>
            <person name="Wedler H."/>
            <person name="Wambutt R."/>
            <person name="Purnelle B."/>
            <person name="Goffeau A."/>
            <person name="Cadieu E."/>
            <person name="Dreano S."/>
            <person name="Gloux S."/>
            <person name="Lelaure V."/>
            <person name="Mottier S."/>
            <person name="Galibert F."/>
            <person name="Aves S.J."/>
            <person name="Xiang Z."/>
            <person name="Hunt C."/>
            <person name="Moore K."/>
            <person name="Hurst S.M."/>
            <person name="Lucas M."/>
            <person name="Rochet M."/>
            <person name="Gaillardin C."/>
            <person name="Tallada V.A."/>
            <person name="Garzon A."/>
            <person name="Thode G."/>
            <person name="Daga R.R."/>
            <person name="Cruzado L."/>
            <person name="Jimenez J."/>
            <person name="Sanchez M."/>
            <person name="del Rey F."/>
            <person name="Benito J."/>
            <person name="Dominguez A."/>
            <person name="Revuelta J.L."/>
            <person name="Moreno S."/>
            <person name="Armstrong J."/>
            <person name="Forsburg S.L."/>
            <person name="Cerutti L."/>
            <person name="Lowe T."/>
            <person name="McCombie W.R."/>
            <person name="Paulsen I."/>
            <person name="Potashkin J."/>
            <person name="Shpakovski G.V."/>
            <person name="Ussery D."/>
            <person name="Barrell B.G."/>
            <person name="Nurse P."/>
        </authorList>
    </citation>
    <scope>NUCLEOTIDE SEQUENCE [LARGE SCALE GENOMIC DNA]</scope>
    <source>
        <strain>972 / ATCC 24843</strain>
    </source>
</reference>
<reference key="3">
    <citation type="journal article" date="2001" name="Nucleic Acids Res.">
        <title>Comprehensive isolation of meiosis-specific genes identifies novel proteins and unusual non-coding transcripts in Schizosaccharomyces pombe.</title>
        <authorList>
            <person name="Watanabe T."/>
            <person name="Miyashita K."/>
            <person name="Saito T.T."/>
            <person name="Yoneki T."/>
            <person name="Kakihara Y."/>
            <person name="Nabeshima K."/>
            <person name="Kishi Y.A."/>
            <person name="Shimoda C."/>
            <person name="Nojima H."/>
        </authorList>
    </citation>
    <scope>NUCLEOTIDE SEQUENCE [MRNA] OF 270-487</scope>
    <source>
        <strain>CD16-1</strain>
    </source>
</reference>
<sequence length="710" mass="79062">MNNSKLSVPGQYEDESSTIYVGNIDSRLSDEEIIKHFSKYGQVESIFRRLLDSFYPKEKAKPFKPPKNGVQYGFVKFVNAESIEEVLKDAKGMTLGQRKLTIKARVVNPAKLTDKKFKPNDTSITANVFNPSIQNNTDEENVKPGLKQSQIKEFIPNVEERNWETVRGINSRNPKPETTLTIPSLGLEDISMQVVPNAFASTLPLSILNLPAEVTPIDLYNHFKQAGVVKGTAVSQFLDQRGFRYGEVIMDSVESCQNAIEKLNNVPYKGSILEVSIKNKASSSVKSIPTTPTGESLWPFPSENANKTQINIENATCSKMTWIMGSPTKEKSQWGSVSTTGVSNQQNHPAAWNPDNKPQSIVHWDSLRESSPSIPNSPIDPSNLYVKNLDDTVITCKSQLEDLFSPFGSILSSMLACYPNSGISKGYGFVAFRQIEAAVRAKDTLNGMMVGKKRIFVCFAERKSDRIRRLQAFFANKPTSEQTAQQDNKALFVKPERSSTVTIRKPIESSTNKISENPTTLSSKVENKNEPKTGENKEPSQTNEYVNCKQENKELSGQLSGNLDIKKEAGKLSHDGEQGNLLKPLVFHANTKLNNRGSAKMGSTATNLKKIQDMLHNKKLSNAYFVPRARATTCTTLTYVTVEPSHFQDEDCNESTNMLSLVGYMDSYPEATSNIQKMNSYHIKDSNKENFLSTTKVNNNSPTTIQLTQI</sequence>
<proteinExistence type="evidence at transcript level"/>